<keyword id="KW-1185">Reference proteome</keyword>
<keyword id="KW-0687">Ribonucleoprotein</keyword>
<keyword id="KW-0689">Ribosomal protein</keyword>
<keyword id="KW-0694">RNA-binding</keyword>
<keyword id="KW-0699">rRNA-binding</keyword>
<dbReference type="EMBL" id="AM743169">
    <property type="protein sequence ID" value="CAQ44485.1"/>
    <property type="molecule type" value="Genomic_DNA"/>
</dbReference>
<dbReference type="RefSeq" id="WP_004145357.1">
    <property type="nucleotide sequence ID" value="NC_010943.1"/>
</dbReference>
<dbReference type="SMR" id="B2FQJ4"/>
<dbReference type="EnsemblBacteria" id="CAQ44485">
    <property type="protein sequence ID" value="CAQ44485"/>
    <property type="gene ID" value="Smlt0916"/>
</dbReference>
<dbReference type="GeneID" id="93831946"/>
<dbReference type="KEGG" id="sml:Smlt0916"/>
<dbReference type="eggNOG" id="COG0093">
    <property type="taxonomic scope" value="Bacteria"/>
</dbReference>
<dbReference type="HOGENOM" id="CLU_095071_2_1_6"/>
<dbReference type="Proteomes" id="UP000008840">
    <property type="component" value="Chromosome"/>
</dbReference>
<dbReference type="GO" id="GO:0022625">
    <property type="term" value="C:cytosolic large ribosomal subunit"/>
    <property type="evidence" value="ECO:0007669"/>
    <property type="project" value="TreeGrafter"/>
</dbReference>
<dbReference type="GO" id="GO:0070180">
    <property type="term" value="F:large ribosomal subunit rRNA binding"/>
    <property type="evidence" value="ECO:0007669"/>
    <property type="project" value="TreeGrafter"/>
</dbReference>
<dbReference type="GO" id="GO:0003735">
    <property type="term" value="F:structural constituent of ribosome"/>
    <property type="evidence" value="ECO:0007669"/>
    <property type="project" value="InterPro"/>
</dbReference>
<dbReference type="GO" id="GO:0006412">
    <property type="term" value="P:translation"/>
    <property type="evidence" value="ECO:0007669"/>
    <property type="project" value="UniProtKB-UniRule"/>
</dbReference>
<dbReference type="CDD" id="cd00337">
    <property type="entry name" value="Ribosomal_uL14"/>
    <property type="match status" value="1"/>
</dbReference>
<dbReference type="FunFam" id="2.40.150.20:FF:000001">
    <property type="entry name" value="50S ribosomal protein L14"/>
    <property type="match status" value="1"/>
</dbReference>
<dbReference type="Gene3D" id="2.40.150.20">
    <property type="entry name" value="Ribosomal protein L14"/>
    <property type="match status" value="1"/>
</dbReference>
<dbReference type="HAMAP" id="MF_01367">
    <property type="entry name" value="Ribosomal_uL14"/>
    <property type="match status" value="1"/>
</dbReference>
<dbReference type="InterPro" id="IPR000218">
    <property type="entry name" value="Ribosomal_uL14"/>
</dbReference>
<dbReference type="InterPro" id="IPR005745">
    <property type="entry name" value="Ribosomal_uL14_bac-type"/>
</dbReference>
<dbReference type="InterPro" id="IPR019972">
    <property type="entry name" value="Ribosomal_uL14_CS"/>
</dbReference>
<dbReference type="InterPro" id="IPR036853">
    <property type="entry name" value="Ribosomal_uL14_sf"/>
</dbReference>
<dbReference type="NCBIfam" id="TIGR01067">
    <property type="entry name" value="rplN_bact"/>
    <property type="match status" value="1"/>
</dbReference>
<dbReference type="PANTHER" id="PTHR11761">
    <property type="entry name" value="50S/60S RIBOSOMAL PROTEIN L14/L23"/>
    <property type="match status" value="1"/>
</dbReference>
<dbReference type="PANTHER" id="PTHR11761:SF3">
    <property type="entry name" value="LARGE RIBOSOMAL SUBUNIT PROTEIN UL14M"/>
    <property type="match status" value="1"/>
</dbReference>
<dbReference type="Pfam" id="PF00238">
    <property type="entry name" value="Ribosomal_L14"/>
    <property type="match status" value="1"/>
</dbReference>
<dbReference type="SMART" id="SM01374">
    <property type="entry name" value="Ribosomal_L14"/>
    <property type="match status" value="1"/>
</dbReference>
<dbReference type="SUPFAM" id="SSF50193">
    <property type="entry name" value="Ribosomal protein L14"/>
    <property type="match status" value="1"/>
</dbReference>
<dbReference type="PROSITE" id="PS00049">
    <property type="entry name" value="RIBOSOMAL_L14"/>
    <property type="match status" value="1"/>
</dbReference>
<protein>
    <recommendedName>
        <fullName evidence="1">Large ribosomal subunit protein uL14</fullName>
    </recommendedName>
    <alternativeName>
        <fullName evidence="2">50S ribosomal protein L14</fullName>
    </alternativeName>
</protein>
<name>RL14_STRMK</name>
<reference key="1">
    <citation type="journal article" date="2008" name="Genome Biol.">
        <title>The complete genome, comparative and functional analysis of Stenotrophomonas maltophilia reveals an organism heavily shielded by drug resistance determinants.</title>
        <authorList>
            <person name="Crossman L.C."/>
            <person name="Gould V.C."/>
            <person name="Dow J.M."/>
            <person name="Vernikos G.S."/>
            <person name="Okazaki A."/>
            <person name="Sebaihia M."/>
            <person name="Saunders D."/>
            <person name="Arrowsmith C."/>
            <person name="Carver T."/>
            <person name="Peters N."/>
            <person name="Adlem E."/>
            <person name="Kerhornou A."/>
            <person name="Lord A."/>
            <person name="Murphy L."/>
            <person name="Seeger K."/>
            <person name="Squares R."/>
            <person name="Rutter S."/>
            <person name="Quail M.A."/>
            <person name="Rajandream M.A."/>
            <person name="Harris D."/>
            <person name="Churcher C."/>
            <person name="Bentley S.D."/>
            <person name="Parkhill J."/>
            <person name="Thomson N.R."/>
            <person name="Avison M.B."/>
        </authorList>
    </citation>
    <scope>NUCLEOTIDE SEQUENCE [LARGE SCALE GENOMIC DNA]</scope>
    <source>
        <strain>K279a</strain>
    </source>
</reference>
<accession>B2FQJ4</accession>
<evidence type="ECO:0000255" key="1">
    <source>
        <dbReference type="HAMAP-Rule" id="MF_01367"/>
    </source>
</evidence>
<evidence type="ECO:0000305" key="2"/>
<sequence>MIQMQSYLDVADNSGAKQVMCFKVLGGSKRRYAGIGDIIKVTVKDAIPRGKVKKGEVYDAVVVRTRKGVRRADGSLIRFDGNAAVLLNSKQEPIGTRIFGPVTRELRSEKFMKIVSLAPEVL</sequence>
<organism>
    <name type="scientific">Stenotrophomonas maltophilia (strain K279a)</name>
    <dbReference type="NCBI Taxonomy" id="522373"/>
    <lineage>
        <taxon>Bacteria</taxon>
        <taxon>Pseudomonadati</taxon>
        <taxon>Pseudomonadota</taxon>
        <taxon>Gammaproteobacteria</taxon>
        <taxon>Lysobacterales</taxon>
        <taxon>Lysobacteraceae</taxon>
        <taxon>Stenotrophomonas</taxon>
        <taxon>Stenotrophomonas maltophilia group</taxon>
    </lineage>
</organism>
<proteinExistence type="inferred from homology"/>
<feature type="chain" id="PRO_1000144335" description="Large ribosomal subunit protein uL14">
    <location>
        <begin position="1"/>
        <end position="122"/>
    </location>
</feature>
<comment type="function">
    <text evidence="1">Binds to 23S rRNA. Forms part of two intersubunit bridges in the 70S ribosome.</text>
</comment>
<comment type="subunit">
    <text evidence="1">Part of the 50S ribosomal subunit. Forms a cluster with proteins L3 and L19. In the 70S ribosome, L14 and L19 interact and together make contacts with the 16S rRNA in bridges B5 and B8.</text>
</comment>
<comment type="similarity">
    <text evidence="1">Belongs to the universal ribosomal protein uL14 family.</text>
</comment>
<gene>
    <name evidence="1" type="primary">rplN</name>
    <name type="ordered locus">Smlt0916</name>
</gene>